<dbReference type="EC" id="3.6.4.12" evidence="2"/>
<dbReference type="EMBL" id="CR855766">
    <property type="protein sequence ID" value="CAJ83441.1"/>
    <property type="molecule type" value="mRNA"/>
</dbReference>
<dbReference type="EMBL" id="BC067307">
    <property type="protein sequence ID" value="AAH67307.1"/>
    <property type="molecule type" value="mRNA"/>
</dbReference>
<dbReference type="RefSeq" id="NP_998877.1">
    <property type="nucleotide sequence ID" value="NM_213712.1"/>
</dbReference>
<dbReference type="SMR" id="Q6NX31"/>
<dbReference type="FunCoup" id="Q6NX31">
    <property type="interactions" value="2563"/>
</dbReference>
<dbReference type="STRING" id="8364.ENSXETP00000050653"/>
<dbReference type="DNASU" id="407945"/>
<dbReference type="GeneID" id="407945"/>
<dbReference type="KEGG" id="xtr:407945"/>
<dbReference type="AGR" id="Xenbase:XB-GENE-5946446"/>
<dbReference type="CTD" id="4176"/>
<dbReference type="Xenbase" id="XB-GENE-5946446">
    <property type="gene designation" value="mcm7"/>
</dbReference>
<dbReference type="InParanoid" id="Q6NX31"/>
<dbReference type="OMA" id="AQHVTYV"/>
<dbReference type="OrthoDB" id="3207464at2759"/>
<dbReference type="Reactome" id="R-XTR-68867">
    <property type="pathway name" value="Assembly of the pre-replicative complex"/>
</dbReference>
<dbReference type="Reactome" id="R-XTR-68949">
    <property type="pathway name" value="Orc1 removal from chromatin"/>
</dbReference>
<dbReference type="Reactome" id="R-XTR-68962">
    <property type="pathway name" value="Activation of the pre-replicative complex"/>
</dbReference>
<dbReference type="Reactome" id="R-XTR-69052">
    <property type="pathway name" value="Switching of origins to a post-replicative state"/>
</dbReference>
<dbReference type="Proteomes" id="UP000008143">
    <property type="component" value="Chromosome 3"/>
</dbReference>
<dbReference type="Bgee" id="ENSXETG00000009104">
    <property type="expression patterns" value="Expressed in 4-cell stage embryo and 14 other cell types or tissues"/>
</dbReference>
<dbReference type="ExpressionAtlas" id="Q6NX31">
    <property type="expression patterns" value="baseline and differential"/>
</dbReference>
<dbReference type="GO" id="GO:0000785">
    <property type="term" value="C:chromatin"/>
    <property type="evidence" value="ECO:0000250"/>
    <property type="project" value="UniProtKB"/>
</dbReference>
<dbReference type="GO" id="GO:0071162">
    <property type="term" value="C:CMG complex"/>
    <property type="evidence" value="ECO:0000250"/>
    <property type="project" value="UniProtKB"/>
</dbReference>
<dbReference type="GO" id="GO:0042555">
    <property type="term" value="C:MCM complex"/>
    <property type="evidence" value="ECO:0000250"/>
    <property type="project" value="UniProtKB"/>
</dbReference>
<dbReference type="GO" id="GO:0005524">
    <property type="term" value="F:ATP binding"/>
    <property type="evidence" value="ECO:0007669"/>
    <property type="project" value="UniProtKB-KW"/>
</dbReference>
<dbReference type="GO" id="GO:0016887">
    <property type="term" value="F:ATP hydrolysis activity"/>
    <property type="evidence" value="ECO:0007669"/>
    <property type="project" value="InterPro"/>
</dbReference>
<dbReference type="GO" id="GO:0003677">
    <property type="term" value="F:DNA binding"/>
    <property type="evidence" value="ECO:0007669"/>
    <property type="project" value="UniProtKB-KW"/>
</dbReference>
<dbReference type="GO" id="GO:0003678">
    <property type="term" value="F:DNA helicase activity"/>
    <property type="evidence" value="ECO:0007669"/>
    <property type="project" value="InterPro"/>
</dbReference>
<dbReference type="GO" id="GO:0008270">
    <property type="term" value="F:zinc ion binding"/>
    <property type="evidence" value="ECO:0007669"/>
    <property type="project" value="UniProtKB-KW"/>
</dbReference>
<dbReference type="GO" id="GO:0044786">
    <property type="term" value="P:cell cycle DNA replication"/>
    <property type="evidence" value="ECO:0000250"/>
    <property type="project" value="UniProtKB"/>
</dbReference>
<dbReference type="GO" id="GO:0006270">
    <property type="term" value="P:DNA replication initiation"/>
    <property type="evidence" value="ECO:0007669"/>
    <property type="project" value="InterPro"/>
</dbReference>
<dbReference type="GO" id="GO:0030174">
    <property type="term" value="P:regulation of DNA-templated DNA replication initiation"/>
    <property type="evidence" value="ECO:0000250"/>
    <property type="project" value="UniProtKB"/>
</dbReference>
<dbReference type="CDD" id="cd17758">
    <property type="entry name" value="MCM7"/>
    <property type="match status" value="1"/>
</dbReference>
<dbReference type="FunFam" id="2.20.28.10:FF:000004">
    <property type="entry name" value="DNA replication licensing factor MCM7"/>
    <property type="match status" value="1"/>
</dbReference>
<dbReference type="FunFam" id="3.30.1640.10:FF:000007">
    <property type="entry name" value="DNA replication licensing factor MCM7"/>
    <property type="match status" value="1"/>
</dbReference>
<dbReference type="FunFam" id="3.40.50.300:FF:000288">
    <property type="entry name" value="DNA replication licensing factor MCM7"/>
    <property type="match status" value="1"/>
</dbReference>
<dbReference type="Gene3D" id="2.20.28.10">
    <property type="match status" value="1"/>
</dbReference>
<dbReference type="Gene3D" id="3.30.1640.10">
    <property type="entry name" value="mini-chromosome maintenance (MCM) complex, chain A, domain 1"/>
    <property type="match status" value="1"/>
</dbReference>
<dbReference type="Gene3D" id="2.40.50.140">
    <property type="entry name" value="Nucleic acid-binding proteins"/>
    <property type="match status" value="1"/>
</dbReference>
<dbReference type="Gene3D" id="3.40.50.300">
    <property type="entry name" value="P-loop containing nucleotide triphosphate hydrolases"/>
    <property type="match status" value="1"/>
</dbReference>
<dbReference type="InterPro" id="IPR003593">
    <property type="entry name" value="AAA+_ATPase"/>
</dbReference>
<dbReference type="InterPro" id="IPR031327">
    <property type="entry name" value="MCM"/>
</dbReference>
<dbReference type="InterPro" id="IPR008050">
    <property type="entry name" value="MCM7"/>
</dbReference>
<dbReference type="InterPro" id="IPR018525">
    <property type="entry name" value="MCM_CS"/>
</dbReference>
<dbReference type="InterPro" id="IPR001208">
    <property type="entry name" value="MCM_dom"/>
</dbReference>
<dbReference type="InterPro" id="IPR041562">
    <property type="entry name" value="MCM_lid"/>
</dbReference>
<dbReference type="InterPro" id="IPR027925">
    <property type="entry name" value="MCM_N"/>
</dbReference>
<dbReference type="InterPro" id="IPR033762">
    <property type="entry name" value="MCM_OB"/>
</dbReference>
<dbReference type="InterPro" id="IPR012340">
    <property type="entry name" value="NA-bd_OB-fold"/>
</dbReference>
<dbReference type="InterPro" id="IPR027417">
    <property type="entry name" value="P-loop_NTPase"/>
</dbReference>
<dbReference type="PANTHER" id="PTHR11630">
    <property type="entry name" value="DNA REPLICATION LICENSING FACTOR MCM FAMILY MEMBER"/>
    <property type="match status" value="1"/>
</dbReference>
<dbReference type="PANTHER" id="PTHR11630:SF26">
    <property type="entry name" value="DNA REPLICATION LICENSING FACTOR MCM7"/>
    <property type="match status" value="1"/>
</dbReference>
<dbReference type="Pfam" id="PF24901">
    <property type="entry name" value="HTH_MCM7"/>
    <property type="match status" value="1"/>
</dbReference>
<dbReference type="Pfam" id="PF00493">
    <property type="entry name" value="MCM"/>
    <property type="match status" value="1"/>
</dbReference>
<dbReference type="Pfam" id="PF17855">
    <property type="entry name" value="MCM_lid"/>
    <property type="match status" value="1"/>
</dbReference>
<dbReference type="Pfam" id="PF14551">
    <property type="entry name" value="MCM_N"/>
    <property type="match status" value="1"/>
</dbReference>
<dbReference type="Pfam" id="PF17207">
    <property type="entry name" value="MCM_OB"/>
    <property type="match status" value="1"/>
</dbReference>
<dbReference type="PRINTS" id="PR01657">
    <property type="entry name" value="MCMFAMILY"/>
</dbReference>
<dbReference type="PRINTS" id="PR01663">
    <property type="entry name" value="MCMPROTEIN7"/>
</dbReference>
<dbReference type="SMART" id="SM00382">
    <property type="entry name" value="AAA"/>
    <property type="match status" value="1"/>
</dbReference>
<dbReference type="SMART" id="SM00350">
    <property type="entry name" value="MCM"/>
    <property type="match status" value="1"/>
</dbReference>
<dbReference type="SUPFAM" id="SSF50249">
    <property type="entry name" value="Nucleic acid-binding proteins"/>
    <property type="match status" value="1"/>
</dbReference>
<dbReference type="SUPFAM" id="SSF52540">
    <property type="entry name" value="P-loop containing nucleoside triphosphate hydrolases"/>
    <property type="match status" value="1"/>
</dbReference>
<dbReference type="PROSITE" id="PS00847">
    <property type="entry name" value="MCM_1"/>
    <property type="match status" value="1"/>
</dbReference>
<dbReference type="PROSITE" id="PS50051">
    <property type="entry name" value="MCM_2"/>
    <property type="match status" value="1"/>
</dbReference>
<comment type="function">
    <text evidence="3">Acts as a component of the mcm2-7 complex (mcm complex) which is the putative replicative helicase essential for 'once per cell cycle' DNA replication initiation and elongation in eukaryotic cells. The active ATPase sites in the mcm2-7 ring are formed through the interaction surfaces of two neighboring subunits such that a critical structure of a conserved arginine finger motif is provided in trans relative to the ATP-binding site of the Walker A box of the adjacent subunit. The six ATPase active sites, however, are likely to contribute differentially to the complex helicase activity. The existence of maternal and zygotic forms of mcm3 and mcm6 suggests that specific forms of mcm2-7 complexes may be used during different stages of development (By similarity).</text>
</comment>
<comment type="catalytic activity">
    <reaction evidence="2">
        <text>ATP + H2O = ADP + phosphate + H(+)</text>
        <dbReference type="Rhea" id="RHEA:13065"/>
        <dbReference type="ChEBI" id="CHEBI:15377"/>
        <dbReference type="ChEBI" id="CHEBI:15378"/>
        <dbReference type="ChEBI" id="CHEBI:30616"/>
        <dbReference type="ChEBI" id="CHEBI:43474"/>
        <dbReference type="ChEBI" id="CHEBI:456216"/>
        <dbReference type="EC" id="3.6.4.12"/>
    </reaction>
    <physiologicalReaction direction="left-to-right" evidence="2">
        <dbReference type="Rhea" id="RHEA:13066"/>
    </physiologicalReaction>
</comment>
<comment type="subunit">
    <text evidence="1 3">Component of the mcm2-7 complex (RLF-M). The complex forms a toroidal hexameric ring with the proposed subunit order mcm2-mcm6-mcm4-mcm7-mcm3-mcm5. The heterodimer of mmcm3/mcm5 interacts with mcm4, mmcm6, mcm7 and weakly with mcm2. The N-terminus is required for interaction with mmcm3, though this interaction may not be direct, and remains in a complex with mmcm3 throughout the cell cycle. Begins to associate with zmcm6 at the neurula stage (By similarity). Component of the replisome complex (By similarity). Component of the CMG helicase complex, composed of the mcm2-7 complex, the GINS complex and cdc45 (By similarity).</text>
</comment>
<comment type="subcellular location">
    <subcellularLocation>
        <location evidence="3">Nucleus</location>
    </subcellularLocation>
    <subcellularLocation>
        <location evidence="3">Chromosome</location>
    </subcellularLocation>
    <text evidence="3">Associated with chromatin before the formation of nuclei and detaches from it as DNA replication progresses.</text>
</comment>
<comment type="PTM">
    <text evidence="3">Ubiquitinated by traip when forks converge following formation of DNA interstrand cross-links. Short ubiquitin chains on mcm7 promote recruitment of DNA glycosylase neil3. If the interstrand cross-link cannot be cleaved by neil3, the ubiquitin chains continue to grow on mcm7, promoting the unloading of the CMG helicase complex by the vcp/p97 ATPase.</text>
</comment>
<comment type="miscellaneous">
    <text evidence="2">Early fractionation of eukaryotic MCM proteins yielded a variety of dimeric, trimeric and tetrameric complexes with unclear biological significance. Specifically a MCM467 subcomplex is shown to have in vitro helicase activity which is inhibited by the MCM2 subunit. The MCM2-7 hexamer is the proposed physiological active complex.</text>
</comment>
<comment type="similarity">
    <text evidence="4">Belongs to the MCM family.</text>
</comment>
<proteinExistence type="evidence at transcript level"/>
<organism>
    <name type="scientific">Xenopus tropicalis</name>
    <name type="common">Western clawed frog</name>
    <name type="synonym">Silurana tropicalis</name>
    <dbReference type="NCBI Taxonomy" id="8364"/>
    <lineage>
        <taxon>Eukaryota</taxon>
        <taxon>Metazoa</taxon>
        <taxon>Chordata</taxon>
        <taxon>Craniata</taxon>
        <taxon>Vertebrata</taxon>
        <taxon>Euteleostomi</taxon>
        <taxon>Amphibia</taxon>
        <taxon>Batrachia</taxon>
        <taxon>Anura</taxon>
        <taxon>Pipoidea</taxon>
        <taxon>Pipidae</taxon>
        <taxon>Xenopodinae</taxon>
        <taxon>Xenopus</taxon>
        <taxon>Silurana</taxon>
    </lineage>
</organism>
<feature type="chain" id="PRO_0000240597" description="DNA replication licensing factor mcm7">
    <location>
        <begin position="1"/>
        <end position="720"/>
    </location>
</feature>
<feature type="domain" description="MCM" evidence="4">
    <location>
        <begin position="331"/>
        <end position="537"/>
    </location>
</feature>
<feature type="zinc finger region" description="C4-type" evidence="4">
    <location>
        <begin position="183"/>
        <end position="210"/>
    </location>
</feature>
<feature type="short sequence motif" description="Arginine finger">
    <location>
        <begin position="512"/>
        <end position="515"/>
    </location>
</feature>
<feature type="binding site" evidence="1">
    <location>
        <position position="344"/>
    </location>
    <ligand>
        <name>ATP</name>
        <dbReference type="ChEBI" id="CHEBI:30616"/>
        <label>1</label>
        <note>ligand shared with MCM3</note>
    </ligand>
</feature>
<feature type="binding site" evidence="1">
    <location>
        <position position="383"/>
    </location>
    <ligand>
        <name>ATP</name>
        <dbReference type="ChEBI" id="CHEBI:30616"/>
        <label>1</label>
        <note>ligand shared with MCM3</note>
    </ligand>
</feature>
<feature type="binding site" evidence="1">
    <location>
        <position position="385"/>
    </location>
    <ligand>
        <name>ATP</name>
        <dbReference type="ChEBI" id="CHEBI:30616"/>
        <label>1</label>
        <note>ligand shared with MCM3</note>
    </ligand>
</feature>
<feature type="binding site" evidence="1">
    <location>
        <position position="386"/>
    </location>
    <ligand>
        <name>ATP</name>
        <dbReference type="ChEBI" id="CHEBI:30616"/>
        <label>1</label>
        <note>ligand shared with MCM3</note>
    </ligand>
</feature>
<feature type="binding site" evidence="1">
    <location>
        <position position="387"/>
    </location>
    <ligand>
        <name>ATP</name>
        <dbReference type="ChEBI" id="CHEBI:30616"/>
        <label>1</label>
        <note>ligand shared with MCM3</note>
    </ligand>
</feature>
<feature type="binding site" evidence="1">
    <location>
        <position position="488"/>
    </location>
    <ligand>
        <name>ATP</name>
        <dbReference type="ChEBI" id="CHEBI:30616"/>
        <label>1</label>
        <note>ligand shared with MCM3</note>
    </ligand>
</feature>
<feature type="binding site" evidence="1">
    <location>
        <position position="513"/>
    </location>
    <ligand>
        <name>ATP</name>
        <dbReference type="ChEBI" id="CHEBI:30616"/>
        <label>2</label>
        <note>ligand shared with MCM4</note>
    </ligand>
</feature>
<feature type="binding site" evidence="1">
    <location>
        <position position="603"/>
    </location>
    <ligand>
        <name>ATP</name>
        <dbReference type="ChEBI" id="CHEBI:30616"/>
        <label>2</label>
        <note>ligand shared with MCM4</note>
    </ligand>
</feature>
<gene>
    <name evidence="5" type="primary">mcm7</name>
    <name type="ORF">TGas137h09.1</name>
</gene>
<reference evidence="5" key="1">
    <citation type="submission" date="2006-03" db="EMBL/GenBank/DDBJ databases">
        <authorList>
            <consortium name="Sanger Xenopus tropicalis EST/cDNA project"/>
        </authorList>
    </citation>
    <scope>NUCLEOTIDE SEQUENCE [LARGE SCALE MRNA]</scope>
    <source>
        <tissue>Gastrula</tissue>
    </source>
</reference>
<reference evidence="5" key="2">
    <citation type="submission" date="2004-03" db="EMBL/GenBank/DDBJ databases">
        <authorList>
            <consortium name="NIH - Xenopus Gene Collection (XGC) project"/>
        </authorList>
    </citation>
    <scope>NUCLEOTIDE SEQUENCE [LARGE SCALE MRNA]</scope>
    <source>
        <tissue evidence="5">Embryo</tissue>
    </source>
</reference>
<keyword id="KW-0067">ATP-binding</keyword>
<keyword id="KW-0131">Cell cycle</keyword>
<keyword id="KW-0158">Chromosome</keyword>
<keyword id="KW-0235">DNA replication</keyword>
<keyword id="KW-0238">DNA-binding</keyword>
<keyword id="KW-0347">Helicase</keyword>
<keyword id="KW-0378">Hydrolase</keyword>
<keyword id="KW-0479">Metal-binding</keyword>
<keyword id="KW-0547">Nucleotide-binding</keyword>
<keyword id="KW-0539">Nucleus</keyword>
<keyword id="KW-1185">Reference proteome</keyword>
<keyword id="KW-0832">Ubl conjugation</keyword>
<keyword id="KW-0862">Zinc</keyword>
<keyword id="KW-0863">Zinc-finger</keyword>
<evidence type="ECO:0000250" key="1">
    <source>
        <dbReference type="UniProtKB" id="P33993"/>
    </source>
</evidence>
<evidence type="ECO:0000250" key="2">
    <source>
        <dbReference type="UniProtKB" id="Q61881"/>
    </source>
</evidence>
<evidence type="ECO:0000250" key="3">
    <source>
        <dbReference type="UniProtKB" id="Q91876"/>
    </source>
</evidence>
<evidence type="ECO:0000255" key="4"/>
<evidence type="ECO:0000312" key="5">
    <source>
        <dbReference type="EMBL" id="AAH67307.1"/>
    </source>
</evidence>
<accession>Q6NX31</accession>
<sequence length="720" mass="81762">MPRDYQAEKEKCKTFLQEFYKDDELGKKNFKYGVQLANIAHREQVALYIDLDDLAEEDPELVDAICENTRRYTNLFADAVQELLPQYKEREVVHKDALDVYIEHRLMMEQRGRDPSETRDPHNQYPPELMRRFELYFKAPSSSKARVVRDVKADSIGKLVTVRGIVTRVTEVKPMMVVATYTCDQCGAETYQPIQSPTFMPLIMCPSRECQTNRSGGRLYLQTRGSKFIKFQELKIQEHSDQVPVGNIPRCMSVYVRGENTRLAQPGDHVSITGVFLPMLRTGFRQVVQGLLSETYLESHRLVKMNKTEDDELGTEELSEEELRQITEEDFYEKLAASIAPEIYGHEDVKKALLLLLVGGVDNSPRGMKIRGNINICLMGDPGVAKSQLLSYIDRLAPRSQYTTGRGSSGVGLTAAVMKDPVTGEMTLEGGALVLADQGVCCIDEFDKMMDTDRTAIHEVMEQQTISIAKAGIMTTLNARCSILAAANPAYGRYNPKKTVEQNIQLPAALLSRFDLLWLIQDKPDRDNDLRLAQHITYVHQHSKQPPSQFQPLDMKLMRRYITMCKRKQPAIPESLADYLTAAYVEMRKEARTNKDMTFTSARTLLSILRLSTALARLRLEDVVEKEDVNEAMRLTEMSKDSLLGDKGQTSRTQRPADVIFSTIREMVPEKGARSVKYSEAEQRAVSKGFTPAQFEAALEEYEELNVWLVNQARTKITFV</sequence>
<name>MCM7_XENTR</name>
<protein>
    <recommendedName>
        <fullName>DNA replication licensing factor mcm7</fullName>
        <ecNumber evidence="2">3.6.4.12</ecNumber>
    </recommendedName>
    <alternativeName>
        <fullName>CDC47 homolog</fullName>
    </alternativeName>
    <alternativeName>
        <fullName>Minichromosome maintenance protein 7</fullName>
    </alternativeName>
</protein>